<name>SUB2_YARLI</name>
<dbReference type="EC" id="3.6.4.13"/>
<dbReference type="EMBL" id="CR382127">
    <property type="protein sequence ID" value="CAG83901.2"/>
    <property type="molecule type" value="Genomic_DNA"/>
</dbReference>
<dbReference type="RefSeq" id="XP_499972.2">
    <property type="nucleotide sequence ID" value="XM_499972.2"/>
</dbReference>
<dbReference type="SMR" id="Q6CH90"/>
<dbReference type="FunCoup" id="Q6CH90">
    <property type="interactions" value="1293"/>
</dbReference>
<dbReference type="STRING" id="284591.Q6CH90"/>
<dbReference type="EnsemblFungi" id="CAG83901">
    <property type="protein sequence ID" value="CAG83901"/>
    <property type="gene ID" value="YALI0_A11157g"/>
</dbReference>
<dbReference type="KEGG" id="yli:2905851"/>
<dbReference type="VEuPathDB" id="FungiDB:YALI0_A11157g"/>
<dbReference type="HOGENOM" id="CLU_003041_1_0_1"/>
<dbReference type="InParanoid" id="Q6CH90"/>
<dbReference type="OMA" id="YAHVEPK"/>
<dbReference type="OrthoDB" id="381at4891"/>
<dbReference type="Proteomes" id="UP000001300">
    <property type="component" value="Chromosome A"/>
</dbReference>
<dbReference type="GO" id="GO:0000781">
    <property type="term" value="C:chromosome, telomeric region"/>
    <property type="evidence" value="ECO:0007669"/>
    <property type="project" value="EnsemblFungi"/>
</dbReference>
<dbReference type="GO" id="GO:0005681">
    <property type="term" value="C:spliceosomal complex"/>
    <property type="evidence" value="ECO:0007669"/>
    <property type="project" value="UniProtKB-KW"/>
</dbReference>
<dbReference type="GO" id="GO:0000346">
    <property type="term" value="C:transcription export complex"/>
    <property type="evidence" value="ECO:0007669"/>
    <property type="project" value="EnsemblFungi"/>
</dbReference>
<dbReference type="GO" id="GO:0005524">
    <property type="term" value="F:ATP binding"/>
    <property type="evidence" value="ECO:0007669"/>
    <property type="project" value="UniProtKB-KW"/>
</dbReference>
<dbReference type="GO" id="GO:0016887">
    <property type="term" value="F:ATP hydrolysis activity"/>
    <property type="evidence" value="ECO:0007669"/>
    <property type="project" value="RHEA"/>
</dbReference>
<dbReference type="GO" id="GO:0003729">
    <property type="term" value="F:mRNA binding"/>
    <property type="evidence" value="ECO:0000318"/>
    <property type="project" value="GO_Central"/>
</dbReference>
<dbReference type="GO" id="GO:0003724">
    <property type="term" value="F:RNA helicase activity"/>
    <property type="evidence" value="ECO:0000318"/>
    <property type="project" value="GO_Central"/>
</dbReference>
<dbReference type="GO" id="GO:0031124">
    <property type="term" value="P:mRNA 3'-end processing"/>
    <property type="evidence" value="ECO:0007669"/>
    <property type="project" value="EnsemblFungi"/>
</dbReference>
<dbReference type="GO" id="GO:0006406">
    <property type="term" value="P:mRNA export from nucleus"/>
    <property type="evidence" value="ECO:0000318"/>
    <property type="project" value="GO_Central"/>
</dbReference>
<dbReference type="GO" id="GO:0000398">
    <property type="term" value="P:mRNA splicing, via spliceosome"/>
    <property type="evidence" value="ECO:0000318"/>
    <property type="project" value="GO_Central"/>
</dbReference>
<dbReference type="GO" id="GO:0031509">
    <property type="term" value="P:subtelomeric heterochromatin formation"/>
    <property type="evidence" value="ECO:0007669"/>
    <property type="project" value="EnsemblFungi"/>
</dbReference>
<dbReference type="GO" id="GO:0006368">
    <property type="term" value="P:transcription elongation by RNA polymerase II"/>
    <property type="evidence" value="ECO:0007669"/>
    <property type="project" value="EnsemblFungi"/>
</dbReference>
<dbReference type="GO" id="GO:0006283">
    <property type="term" value="P:transcription-coupled nucleotide-excision repair"/>
    <property type="evidence" value="ECO:0007669"/>
    <property type="project" value="EnsemblFungi"/>
</dbReference>
<dbReference type="CDD" id="cd17950">
    <property type="entry name" value="DEADc_DDX39"/>
    <property type="match status" value="1"/>
</dbReference>
<dbReference type="CDD" id="cd18787">
    <property type="entry name" value="SF2_C_DEAD"/>
    <property type="match status" value="1"/>
</dbReference>
<dbReference type="FunFam" id="3.40.50.300:FF:000809">
    <property type="entry name" value="ATP-dependent RNA helicase SUB2"/>
    <property type="match status" value="1"/>
</dbReference>
<dbReference type="FunFam" id="3.40.50.300:FF:000111">
    <property type="entry name" value="DEAD-box ATP-dependent RNA helicase"/>
    <property type="match status" value="1"/>
</dbReference>
<dbReference type="Gene3D" id="3.40.50.300">
    <property type="entry name" value="P-loop containing nucleotide triphosphate hydrolases"/>
    <property type="match status" value="2"/>
</dbReference>
<dbReference type="InterPro" id="IPR011545">
    <property type="entry name" value="DEAD/DEAH_box_helicase_dom"/>
</dbReference>
<dbReference type="InterPro" id="IPR014001">
    <property type="entry name" value="Helicase_ATP-bd"/>
</dbReference>
<dbReference type="InterPro" id="IPR001650">
    <property type="entry name" value="Helicase_C-like"/>
</dbReference>
<dbReference type="InterPro" id="IPR027417">
    <property type="entry name" value="P-loop_NTPase"/>
</dbReference>
<dbReference type="InterPro" id="IPR014014">
    <property type="entry name" value="RNA_helicase_DEAD_Q_motif"/>
</dbReference>
<dbReference type="PANTHER" id="PTHR47958">
    <property type="entry name" value="ATP-DEPENDENT RNA HELICASE DBP3"/>
    <property type="match status" value="1"/>
</dbReference>
<dbReference type="Pfam" id="PF00270">
    <property type="entry name" value="DEAD"/>
    <property type="match status" value="1"/>
</dbReference>
<dbReference type="Pfam" id="PF00271">
    <property type="entry name" value="Helicase_C"/>
    <property type="match status" value="1"/>
</dbReference>
<dbReference type="SMART" id="SM00487">
    <property type="entry name" value="DEXDc"/>
    <property type="match status" value="1"/>
</dbReference>
<dbReference type="SMART" id="SM00490">
    <property type="entry name" value="HELICc"/>
    <property type="match status" value="1"/>
</dbReference>
<dbReference type="SUPFAM" id="SSF52540">
    <property type="entry name" value="P-loop containing nucleoside triphosphate hydrolases"/>
    <property type="match status" value="1"/>
</dbReference>
<dbReference type="PROSITE" id="PS51192">
    <property type="entry name" value="HELICASE_ATP_BIND_1"/>
    <property type="match status" value="1"/>
</dbReference>
<dbReference type="PROSITE" id="PS51194">
    <property type="entry name" value="HELICASE_CTER"/>
    <property type="match status" value="1"/>
</dbReference>
<dbReference type="PROSITE" id="PS51195">
    <property type="entry name" value="Q_MOTIF"/>
    <property type="match status" value="1"/>
</dbReference>
<proteinExistence type="inferred from homology"/>
<evidence type="ECO:0000250" key="1"/>
<evidence type="ECO:0000255" key="2">
    <source>
        <dbReference type="PROSITE-ProRule" id="PRU00541"/>
    </source>
</evidence>
<evidence type="ECO:0000255" key="3">
    <source>
        <dbReference type="PROSITE-ProRule" id="PRU00542"/>
    </source>
</evidence>
<evidence type="ECO:0000256" key="4">
    <source>
        <dbReference type="SAM" id="MobiDB-lite"/>
    </source>
</evidence>
<evidence type="ECO:0000305" key="5"/>
<feature type="chain" id="PRO_0000232267" description="ATP-dependent RNA helicase SUB2">
    <location>
        <begin position="1"/>
        <end position="441"/>
    </location>
</feature>
<feature type="domain" description="Helicase ATP-binding" evidence="2">
    <location>
        <begin position="88"/>
        <end position="263"/>
    </location>
</feature>
<feature type="domain" description="Helicase C-terminal" evidence="3">
    <location>
        <begin position="275"/>
        <end position="436"/>
    </location>
</feature>
<feature type="region of interest" description="Disordered" evidence="4">
    <location>
        <begin position="1"/>
        <end position="47"/>
    </location>
</feature>
<feature type="short sequence motif" description="Q motif">
    <location>
        <begin position="57"/>
        <end position="85"/>
    </location>
</feature>
<feature type="short sequence motif" description="DECD box">
    <location>
        <begin position="210"/>
        <end position="213"/>
    </location>
</feature>
<feature type="compositionally biased region" description="Acidic residues" evidence="4">
    <location>
        <begin position="1"/>
        <end position="17"/>
    </location>
</feature>
<feature type="compositionally biased region" description="Polar residues" evidence="4">
    <location>
        <begin position="21"/>
        <end position="30"/>
    </location>
</feature>
<feature type="compositionally biased region" description="Basic and acidic residues" evidence="4">
    <location>
        <begin position="33"/>
        <end position="46"/>
    </location>
</feature>
<feature type="binding site" evidence="2">
    <location>
        <begin position="101"/>
        <end position="108"/>
    </location>
    <ligand>
        <name>ATP</name>
        <dbReference type="ChEBI" id="CHEBI:30616"/>
    </ligand>
</feature>
<comment type="function">
    <text evidence="1">ATP-binding RNA helicase involved in transcription elongation and required for the export of mRNA out of the nucleus. SUB2 also plays a role in pre-mRNA splicing and spliceosome assembly. May be involved in rDNA and telomeric silencing, and maintenance of genome integrity (By similarity).</text>
</comment>
<comment type="catalytic activity">
    <reaction>
        <text>ATP + H2O = ADP + phosphate + H(+)</text>
        <dbReference type="Rhea" id="RHEA:13065"/>
        <dbReference type="ChEBI" id="CHEBI:15377"/>
        <dbReference type="ChEBI" id="CHEBI:15378"/>
        <dbReference type="ChEBI" id="CHEBI:30616"/>
        <dbReference type="ChEBI" id="CHEBI:43474"/>
        <dbReference type="ChEBI" id="CHEBI:456216"/>
        <dbReference type="EC" id="3.6.4.13"/>
    </reaction>
</comment>
<comment type="subcellular location">
    <subcellularLocation>
        <location evidence="1">Nucleus</location>
    </subcellularLocation>
</comment>
<comment type="domain">
    <text>The Q motif is unique to and characteristic of the DEAD box family of RNA helicases and controls ATP binding and hydrolysis.</text>
</comment>
<comment type="similarity">
    <text evidence="5">Belongs to the DEAD box helicase family. DECD subfamily.</text>
</comment>
<gene>
    <name type="primary">SUB2</name>
    <name type="ordered locus">YALI0A11157g</name>
</gene>
<accession>Q6CH90</accession>
<accession>Q6CH89</accession>
<keyword id="KW-0067">ATP-binding</keyword>
<keyword id="KW-0347">Helicase</keyword>
<keyword id="KW-0378">Hydrolase</keyword>
<keyword id="KW-0507">mRNA processing</keyword>
<keyword id="KW-0508">mRNA splicing</keyword>
<keyword id="KW-0509">mRNA transport</keyword>
<keyword id="KW-0547">Nucleotide-binding</keyword>
<keyword id="KW-0539">Nucleus</keyword>
<keyword id="KW-1185">Reference proteome</keyword>
<keyword id="KW-0694">RNA-binding</keyword>
<keyword id="KW-0747">Spliceosome</keyword>
<keyword id="KW-0813">Transport</keyword>
<reference key="1">
    <citation type="journal article" date="2004" name="Nature">
        <title>Genome evolution in yeasts.</title>
        <authorList>
            <person name="Dujon B."/>
            <person name="Sherman D."/>
            <person name="Fischer G."/>
            <person name="Durrens P."/>
            <person name="Casaregola S."/>
            <person name="Lafontaine I."/>
            <person name="de Montigny J."/>
            <person name="Marck C."/>
            <person name="Neuveglise C."/>
            <person name="Talla E."/>
            <person name="Goffard N."/>
            <person name="Frangeul L."/>
            <person name="Aigle M."/>
            <person name="Anthouard V."/>
            <person name="Babour A."/>
            <person name="Barbe V."/>
            <person name="Barnay S."/>
            <person name="Blanchin S."/>
            <person name="Beckerich J.-M."/>
            <person name="Beyne E."/>
            <person name="Bleykasten C."/>
            <person name="Boisrame A."/>
            <person name="Boyer J."/>
            <person name="Cattolico L."/>
            <person name="Confanioleri F."/>
            <person name="de Daruvar A."/>
            <person name="Despons L."/>
            <person name="Fabre E."/>
            <person name="Fairhead C."/>
            <person name="Ferry-Dumazet H."/>
            <person name="Groppi A."/>
            <person name="Hantraye F."/>
            <person name="Hennequin C."/>
            <person name="Jauniaux N."/>
            <person name="Joyet P."/>
            <person name="Kachouri R."/>
            <person name="Kerrest A."/>
            <person name="Koszul R."/>
            <person name="Lemaire M."/>
            <person name="Lesur I."/>
            <person name="Ma L."/>
            <person name="Muller H."/>
            <person name="Nicaud J.-M."/>
            <person name="Nikolski M."/>
            <person name="Oztas S."/>
            <person name="Ozier-Kalogeropoulos O."/>
            <person name="Pellenz S."/>
            <person name="Potier S."/>
            <person name="Richard G.-F."/>
            <person name="Straub M.-L."/>
            <person name="Suleau A."/>
            <person name="Swennen D."/>
            <person name="Tekaia F."/>
            <person name="Wesolowski-Louvel M."/>
            <person name="Westhof E."/>
            <person name="Wirth B."/>
            <person name="Zeniou-Meyer M."/>
            <person name="Zivanovic Y."/>
            <person name="Bolotin-Fukuhara M."/>
            <person name="Thierry A."/>
            <person name="Bouchier C."/>
            <person name="Caudron B."/>
            <person name="Scarpelli C."/>
            <person name="Gaillardin C."/>
            <person name="Weissenbach J."/>
            <person name="Wincker P."/>
            <person name="Souciet J.-L."/>
        </authorList>
    </citation>
    <scope>NUCLEOTIDE SEQUENCE [LARGE SCALE GENOMIC DNA]</scope>
    <source>
        <strain>CLIB 122 / E 150</strain>
    </source>
</reference>
<organism>
    <name type="scientific">Yarrowia lipolytica (strain CLIB 122 / E 150)</name>
    <name type="common">Yeast</name>
    <name type="synonym">Candida lipolytica</name>
    <dbReference type="NCBI Taxonomy" id="284591"/>
    <lineage>
        <taxon>Eukaryota</taxon>
        <taxon>Fungi</taxon>
        <taxon>Dikarya</taxon>
        <taxon>Ascomycota</taxon>
        <taxon>Saccharomycotina</taxon>
        <taxon>Dipodascomycetes</taxon>
        <taxon>Dipodascales</taxon>
        <taxon>Dipodascales incertae sedis</taxon>
        <taxon>Yarrowia</taxon>
    </lineage>
</organism>
<sequence>MSHEGEEELLDYSDSEEIALPSTTVESGSNGDAKAETTTVKEENTEQKGSYVGIHSTGFRDFLLKPELLRAIVDCGFEHPSEVQQVCIPQSILGTDVLCQAKAGVGKTAVFVLSTLQQLEPVPGECSVVVLCHTRELAYQIMNEYARFSKYLPDVKTAVFYGGSPIQKDIELIQNKETSPHVIVATPGRLHALVRDKHLRLGNVKTFVIDECDKVLDQIDMRRDVQEIFRVTPRQKQVMMFSATLSQEIRPICKKFMSSPLEILVDDEGKLTLHGLQQYYVDVEEKSKNRKLGDLLDNLEFNQVIIFVKSTSRANGLSQVLNANGFPCTAVHSGIPQEERIARYKEFKEFKKRICVSTDVFGRGIDIERINLAINYDLPAEADQYLHRVGRAGRFGTKGLAISFVSTPEDKEVLAKIQERFEVNIAPYPAEGVDPSTYMNS</sequence>
<protein>
    <recommendedName>
        <fullName>ATP-dependent RNA helicase SUB2</fullName>
        <ecNumber>3.6.4.13</ecNumber>
    </recommendedName>
</protein>